<protein>
    <recommendedName>
        <fullName evidence="1">Phenylalanine--tRNA ligase alpha subunit</fullName>
        <ecNumber evidence="1">6.1.1.20</ecNumber>
    </recommendedName>
    <alternativeName>
        <fullName evidence="1">Phenylalanyl-tRNA synthetase alpha subunit</fullName>
        <shortName evidence="1">PheRS</shortName>
    </alternativeName>
</protein>
<sequence>MIQTEEMNQLKADALADISQAADEKALQDVKVKYLGKKGSVSGLMKQMKDLSNEEKPKFGQAVNEVRQAIESAIADRKSVLEQDRLNKQLEEETIDVTLPSRSIKLGATHPLTRTIQEIEDLFLGLGFEIVNGYEVEQDYYNFEALNLPKSHPARDMQDTFYITEETLLRTHTSPVQARTLEKRNGQGPVKIICPGKVYRRDSDDATHSHQFTQIEGLVVAENIKMSDLKGTLELVAKKLFGEEREIRLRPSYFPFTEPSVEVDVSCFKCGGKGCNVCKQTGWIEILGAGMVHPNVLEMAGFDSSKYTGFAFGMGPDRIAMLKYGIEDIRYFYTNDVRFLDQFKAVEDRGEA</sequence>
<accession>B9DPU8</accession>
<organism>
    <name type="scientific">Staphylococcus carnosus (strain TM300)</name>
    <dbReference type="NCBI Taxonomy" id="396513"/>
    <lineage>
        <taxon>Bacteria</taxon>
        <taxon>Bacillati</taxon>
        <taxon>Bacillota</taxon>
        <taxon>Bacilli</taxon>
        <taxon>Bacillales</taxon>
        <taxon>Staphylococcaceae</taxon>
        <taxon>Staphylococcus</taxon>
    </lineage>
</organism>
<proteinExistence type="inferred from homology"/>
<gene>
    <name evidence="1" type="primary">pheS</name>
    <name type="ordered locus">Sca_0756</name>
</gene>
<feature type="chain" id="PRO_1000199325" description="Phenylalanine--tRNA ligase alpha subunit">
    <location>
        <begin position="1"/>
        <end position="352"/>
    </location>
</feature>
<feature type="binding site" evidence="1">
    <location>
        <position position="258"/>
    </location>
    <ligand>
        <name>Mg(2+)</name>
        <dbReference type="ChEBI" id="CHEBI:18420"/>
        <note>shared with beta subunit</note>
    </ligand>
</feature>
<evidence type="ECO:0000255" key="1">
    <source>
        <dbReference type="HAMAP-Rule" id="MF_00281"/>
    </source>
</evidence>
<keyword id="KW-0030">Aminoacyl-tRNA synthetase</keyword>
<keyword id="KW-0067">ATP-binding</keyword>
<keyword id="KW-0963">Cytoplasm</keyword>
<keyword id="KW-0436">Ligase</keyword>
<keyword id="KW-0460">Magnesium</keyword>
<keyword id="KW-0479">Metal-binding</keyword>
<keyword id="KW-0547">Nucleotide-binding</keyword>
<keyword id="KW-0648">Protein biosynthesis</keyword>
<keyword id="KW-1185">Reference proteome</keyword>
<name>SYFA_STACT</name>
<reference key="1">
    <citation type="journal article" date="2009" name="Appl. Environ. Microbiol.">
        <title>Genome analysis of the meat starter culture bacterium Staphylococcus carnosus TM300.</title>
        <authorList>
            <person name="Rosenstein R."/>
            <person name="Nerz C."/>
            <person name="Biswas L."/>
            <person name="Resch A."/>
            <person name="Raddatz G."/>
            <person name="Schuster S.C."/>
            <person name="Goetz F."/>
        </authorList>
    </citation>
    <scope>NUCLEOTIDE SEQUENCE [LARGE SCALE GENOMIC DNA]</scope>
    <source>
        <strain>TM300</strain>
    </source>
</reference>
<dbReference type="EC" id="6.1.1.20" evidence="1"/>
<dbReference type="EMBL" id="AM295250">
    <property type="protein sequence ID" value="CAL27666.1"/>
    <property type="molecule type" value="Genomic_DNA"/>
</dbReference>
<dbReference type="RefSeq" id="WP_015900008.1">
    <property type="nucleotide sequence ID" value="NC_012121.1"/>
</dbReference>
<dbReference type="SMR" id="B9DPU8"/>
<dbReference type="GeneID" id="93795693"/>
<dbReference type="KEGG" id="sca:SCA_0756"/>
<dbReference type="eggNOG" id="COG0016">
    <property type="taxonomic scope" value="Bacteria"/>
</dbReference>
<dbReference type="HOGENOM" id="CLU_025086_0_1_9"/>
<dbReference type="OrthoDB" id="9800719at2"/>
<dbReference type="BioCyc" id="SCAR396513:SCA_RS03830-MONOMER"/>
<dbReference type="Proteomes" id="UP000000444">
    <property type="component" value="Chromosome"/>
</dbReference>
<dbReference type="GO" id="GO:0005737">
    <property type="term" value="C:cytoplasm"/>
    <property type="evidence" value="ECO:0007669"/>
    <property type="project" value="UniProtKB-SubCell"/>
</dbReference>
<dbReference type="GO" id="GO:0005524">
    <property type="term" value="F:ATP binding"/>
    <property type="evidence" value="ECO:0007669"/>
    <property type="project" value="UniProtKB-UniRule"/>
</dbReference>
<dbReference type="GO" id="GO:0140096">
    <property type="term" value="F:catalytic activity, acting on a protein"/>
    <property type="evidence" value="ECO:0007669"/>
    <property type="project" value="UniProtKB-ARBA"/>
</dbReference>
<dbReference type="GO" id="GO:0000287">
    <property type="term" value="F:magnesium ion binding"/>
    <property type="evidence" value="ECO:0007669"/>
    <property type="project" value="UniProtKB-UniRule"/>
</dbReference>
<dbReference type="GO" id="GO:0004826">
    <property type="term" value="F:phenylalanine-tRNA ligase activity"/>
    <property type="evidence" value="ECO:0007669"/>
    <property type="project" value="UniProtKB-UniRule"/>
</dbReference>
<dbReference type="GO" id="GO:0016740">
    <property type="term" value="F:transferase activity"/>
    <property type="evidence" value="ECO:0007669"/>
    <property type="project" value="UniProtKB-ARBA"/>
</dbReference>
<dbReference type="GO" id="GO:0000049">
    <property type="term" value="F:tRNA binding"/>
    <property type="evidence" value="ECO:0007669"/>
    <property type="project" value="InterPro"/>
</dbReference>
<dbReference type="GO" id="GO:0006432">
    <property type="term" value="P:phenylalanyl-tRNA aminoacylation"/>
    <property type="evidence" value="ECO:0007669"/>
    <property type="project" value="UniProtKB-UniRule"/>
</dbReference>
<dbReference type="CDD" id="cd00496">
    <property type="entry name" value="PheRS_alpha_core"/>
    <property type="match status" value="1"/>
</dbReference>
<dbReference type="FunFam" id="3.30.930.10:FF:000003">
    <property type="entry name" value="Phenylalanine--tRNA ligase alpha subunit"/>
    <property type="match status" value="1"/>
</dbReference>
<dbReference type="Gene3D" id="3.30.930.10">
    <property type="entry name" value="Bira Bifunctional Protein, Domain 2"/>
    <property type="match status" value="1"/>
</dbReference>
<dbReference type="HAMAP" id="MF_00281">
    <property type="entry name" value="Phe_tRNA_synth_alpha1"/>
    <property type="match status" value="1"/>
</dbReference>
<dbReference type="InterPro" id="IPR006195">
    <property type="entry name" value="aa-tRNA-synth_II"/>
</dbReference>
<dbReference type="InterPro" id="IPR045864">
    <property type="entry name" value="aa-tRNA-synth_II/BPL/LPL"/>
</dbReference>
<dbReference type="InterPro" id="IPR004529">
    <property type="entry name" value="Phe-tRNA-synth_IIc_asu"/>
</dbReference>
<dbReference type="InterPro" id="IPR004188">
    <property type="entry name" value="Phe-tRNA_ligase_II_N"/>
</dbReference>
<dbReference type="InterPro" id="IPR022911">
    <property type="entry name" value="Phe_tRNA_ligase_alpha1_bac"/>
</dbReference>
<dbReference type="InterPro" id="IPR002319">
    <property type="entry name" value="Phenylalanyl-tRNA_Synthase"/>
</dbReference>
<dbReference type="InterPro" id="IPR010978">
    <property type="entry name" value="tRNA-bd_arm"/>
</dbReference>
<dbReference type="NCBIfam" id="TIGR00468">
    <property type="entry name" value="pheS"/>
    <property type="match status" value="1"/>
</dbReference>
<dbReference type="PANTHER" id="PTHR11538:SF41">
    <property type="entry name" value="PHENYLALANINE--TRNA LIGASE, MITOCHONDRIAL"/>
    <property type="match status" value="1"/>
</dbReference>
<dbReference type="PANTHER" id="PTHR11538">
    <property type="entry name" value="PHENYLALANYL-TRNA SYNTHETASE"/>
    <property type="match status" value="1"/>
</dbReference>
<dbReference type="Pfam" id="PF02912">
    <property type="entry name" value="Phe_tRNA-synt_N"/>
    <property type="match status" value="1"/>
</dbReference>
<dbReference type="Pfam" id="PF01409">
    <property type="entry name" value="tRNA-synt_2d"/>
    <property type="match status" value="1"/>
</dbReference>
<dbReference type="SUPFAM" id="SSF55681">
    <property type="entry name" value="Class II aaRS and biotin synthetases"/>
    <property type="match status" value="1"/>
</dbReference>
<dbReference type="SUPFAM" id="SSF46589">
    <property type="entry name" value="tRNA-binding arm"/>
    <property type="match status" value="1"/>
</dbReference>
<dbReference type="PROSITE" id="PS50862">
    <property type="entry name" value="AA_TRNA_LIGASE_II"/>
    <property type="match status" value="1"/>
</dbReference>
<comment type="catalytic activity">
    <reaction evidence="1">
        <text>tRNA(Phe) + L-phenylalanine + ATP = L-phenylalanyl-tRNA(Phe) + AMP + diphosphate + H(+)</text>
        <dbReference type="Rhea" id="RHEA:19413"/>
        <dbReference type="Rhea" id="RHEA-COMP:9668"/>
        <dbReference type="Rhea" id="RHEA-COMP:9699"/>
        <dbReference type="ChEBI" id="CHEBI:15378"/>
        <dbReference type="ChEBI" id="CHEBI:30616"/>
        <dbReference type="ChEBI" id="CHEBI:33019"/>
        <dbReference type="ChEBI" id="CHEBI:58095"/>
        <dbReference type="ChEBI" id="CHEBI:78442"/>
        <dbReference type="ChEBI" id="CHEBI:78531"/>
        <dbReference type="ChEBI" id="CHEBI:456215"/>
        <dbReference type="EC" id="6.1.1.20"/>
    </reaction>
</comment>
<comment type="cofactor">
    <cofactor evidence="1">
        <name>Mg(2+)</name>
        <dbReference type="ChEBI" id="CHEBI:18420"/>
    </cofactor>
    <text evidence="1">Binds 2 magnesium ions per tetramer.</text>
</comment>
<comment type="subunit">
    <text evidence="1">Tetramer of two alpha and two beta subunits.</text>
</comment>
<comment type="subcellular location">
    <subcellularLocation>
        <location evidence="1">Cytoplasm</location>
    </subcellularLocation>
</comment>
<comment type="similarity">
    <text evidence="1">Belongs to the class-II aminoacyl-tRNA synthetase family. Phe-tRNA synthetase alpha subunit type 1 subfamily.</text>
</comment>